<comment type="function">
    <text evidence="3 5 8">Histone H3-like variant which exclusively replaces conventional H3 in the nucleosome core of centromeric chromatin at the inner plate of the kinetochore (PubMed:11483958, PubMed:16839185). Required for recruitment and assembly of kinetochore proteins, mitotic progression and chromosome segregation (PubMed:11483958, PubMed:16839185, PubMed:24703848). May serve as an epigenetic mark that propagates centromere identity through replication and cell division (PubMed:11483958, PubMed:16839185).</text>
</comment>
<comment type="subunit">
    <text evidence="1 4 8">Forms a nucleosome-like histone octamer containing two molecules each of H2A, H2B, cid and H4 assembled in one cid-H4 heterotetramer and two H2A-H2B heterodimers (By similarity). The cid-H4 heterotetramer is more compact and structurally more rigid than corresponding H3-H4 heterotetramers (By similarity). Interacts with the condensin subunit Cap-G (PubMed:15592865). Interacts with Chrac-14 (PubMed:24703848).</text>
</comment>
<comment type="interaction">
    <interactant intactId="EBI-129287">
        <id>Q9V6Q2</id>
    </interactant>
    <interactant intactId="EBI-75924">
        <id>Q24572</id>
        <label>Caf1-55</label>
    </interactant>
    <organismsDiffer>false</organismsDiffer>
    <experiments>6</experiments>
</comment>
<comment type="interaction">
    <interactant intactId="EBI-129287">
        <id>Q9V6Q2</id>
    </interactant>
    <interactant intactId="EBI-182580">
        <id>P84051</id>
        <label>His2A:CG33865</label>
    </interactant>
    <organismsDiffer>false</organismsDiffer>
    <experiments>2</experiments>
</comment>
<comment type="subcellular location">
    <subcellularLocation>
        <location evidence="8">Nucleus</location>
    </subcellularLocation>
    <subcellularLocation>
        <location evidence="7">Chromosome</location>
        <location evidence="7">Centromere</location>
        <location evidence="7">Kinetochore</location>
    </subcellularLocation>
    <text evidence="7">Localizes exclusively in the kinetochore domain of centromeres. Co-expressed with yemalpha.</text>
</comment>
<comment type="similarity">
    <text evidence="10">Belongs to the histone H3 family.</text>
</comment>
<comment type="sequence caution" evidence="10">
    <conflict type="frameshift">
        <sequence resource="EMBL-CDS" id="AAM75058"/>
    </conflict>
</comment>
<keyword id="KW-0002">3D-structure</keyword>
<keyword id="KW-0137">Centromere</keyword>
<keyword id="KW-0158">Chromosome</keyword>
<keyword id="KW-0238">DNA-binding</keyword>
<keyword id="KW-0995">Kinetochore</keyword>
<keyword id="KW-0544">Nucleosome core</keyword>
<keyword id="KW-0539">Nucleus</keyword>
<keyword id="KW-0597">Phosphoprotein</keyword>
<keyword id="KW-1185">Reference proteome</keyword>
<gene>
    <name evidence="11" type="primary">cid</name>
    <name evidence="9 11" type="synonym">CENP-A</name>
    <name evidence="11" type="ORF">CG13329</name>
</gene>
<dbReference type="EMBL" id="AF259371">
    <property type="protein sequence ID" value="AAF72652.1"/>
    <property type="molecule type" value="Genomic_DNA"/>
</dbReference>
<dbReference type="EMBL" id="AY126929">
    <property type="protein sequence ID" value="AAM80987.1"/>
    <property type="molecule type" value="Genomic_DNA"/>
</dbReference>
<dbReference type="EMBL" id="AY126930">
    <property type="protein sequence ID" value="AAM80988.1"/>
    <property type="molecule type" value="Genomic_DNA"/>
</dbReference>
<dbReference type="EMBL" id="AY126931">
    <property type="protein sequence ID" value="AAM80989.1"/>
    <property type="molecule type" value="Genomic_DNA"/>
</dbReference>
<dbReference type="EMBL" id="AY126932">
    <property type="protein sequence ID" value="AAM80990.1"/>
    <property type="molecule type" value="Genomic_DNA"/>
</dbReference>
<dbReference type="EMBL" id="AY126933">
    <property type="protein sequence ID" value="AAM80991.1"/>
    <property type="molecule type" value="Genomic_DNA"/>
</dbReference>
<dbReference type="EMBL" id="AE013599">
    <property type="protein sequence ID" value="AAF58371.2"/>
    <property type="molecule type" value="Genomic_DNA"/>
</dbReference>
<dbReference type="EMBL" id="AY128465">
    <property type="protein sequence ID" value="AAM75058.1"/>
    <property type="status" value="ALT_FRAME"/>
    <property type="molecule type" value="mRNA"/>
</dbReference>
<dbReference type="RefSeq" id="NP_523730.2">
    <property type="nucleotide sequence ID" value="NM_079006.4"/>
</dbReference>
<dbReference type="PDB" id="6XWS">
    <property type="method" value="X-ray"/>
    <property type="resolution" value="4.36 A"/>
    <property type="chains" value="A=1-225"/>
</dbReference>
<dbReference type="PDB" id="6XWT">
    <property type="method" value="X-ray"/>
    <property type="resolution" value="3.47 A"/>
    <property type="chains" value="A/C=1-225"/>
</dbReference>
<dbReference type="PDBsum" id="6XWS"/>
<dbReference type="PDBsum" id="6XWT"/>
<dbReference type="SMR" id="Q9V6Q2"/>
<dbReference type="BioGRID" id="62254">
    <property type="interactions" value="28"/>
</dbReference>
<dbReference type="DIP" id="DIP-29506N"/>
<dbReference type="FunCoup" id="Q9V6Q2">
    <property type="interactions" value="33"/>
</dbReference>
<dbReference type="IntAct" id="Q9V6Q2">
    <property type="interactions" value="6"/>
</dbReference>
<dbReference type="MINT" id="Q9V6Q2"/>
<dbReference type="STRING" id="7227.FBpp0086787"/>
<dbReference type="iPTMnet" id="Q9V6Q2"/>
<dbReference type="PaxDb" id="7227-FBpp0086787"/>
<dbReference type="DNASU" id="36495"/>
<dbReference type="EnsemblMetazoa" id="FBtr0087667">
    <property type="protein sequence ID" value="FBpp0086787"/>
    <property type="gene ID" value="FBgn0040477"/>
</dbReference>
<dbReference type="GeneID" id="36495"/>
<dbReference type="KEGG" id="dme:Dmel_CG13329"/>
<dbReference type="AGR" id="FB:FBgn0040477"/>
<dbReference type="CTD" id="36495"/>
<dbReference type="FlyBase" id="FBgn0040477">
    <property type="gene designation" value="cid"/>
</dbReference>
<dbReference type="VEuPathDB" id="VectorBase:FBgn0040477"/>
<dbReference type="eggNOG" id="KOG1745">
    <property type="taxonomic scope" value="Eukaryota"/>
</dbReference>
<dbReference type="HOGENOM" id="CLU_091477_0_0_1"/>
<dbReference type="InParanoid" id="Q9V6Q2"/>
<dbReference type="OMA" id="DSYMLTK"/>
<dbReference type="OrthoDB" id="420022at2759"/>
<dbReference type="PhylomeDB" id="Q9V6Q2"/>
<dbReference type="BioGRID-ORCS" id="36495">
    <property type="hits" value="0 hits in 1 CRISPR screen"/>
</dbReference>
<dbReference type="GenomeRNAi" id="36495"/>
<dbReference type="PRO" id="PR:Q9V6Q2"/>
<dbReference type="Proteomes" id="UP000000803">
    <property type="component" value="Chromosome 2R"/>
</dbReference>
<dbReference type="Bgee" id="FBgn0040477">
    <property type="expression patterns" value="Expressed in secondary oocyte and 14 other cell types or tissues"/>
</dbReference>
<dbReference type="ExpressionAtlas" id="Q9V6Q2">
    <property type="expression patterns" value="baseline and differential"/>
</dbReference>
<dbReference type="GO" id="GO:0043505">
    <property type="term" value="C:CENP-A containing nucleosome"/>
    <property type="evidence" value="ECO:0000314"/>
    <property type="project" value="FlyBase"/>
</dbReference>
<dbReference type="GO" id="GO:0000775">
    <property type="term" value="C:chromosome, centromeric region"/>
    <property type="evidence" value="ECO:0000314"/>
    <property type="project" value="FlyBase"/>
</dbReference>
<dbReference type="GO" id="GO:0000779">
    <property type="term" value="C:condensed chromosome, centromeric region"/>
    <property type="evidence" value="ECO:0000314"/>
    <property type="project" value="FlyBase"/>
</dbReference>
<dbReference type="GO" id="GO:0000939">
    <property type="term" value="C:inner kinetochore"/>
    <property type="evidence" value="ECO:0000314"/>
    <property type="project" value="UniProtKB"/>
</dbReference>
<dbReference type="GO" id="GO:0000776">
    <property type="term" value="C:kinetochore"/>
    <property type="evidence" value="ECO:0000314"/>
    <property type="project" value="FlyBase"/>
</dbReference>
<dbReference type="GO" id="GO:0000786">
    <property type="term" value="C:nucleosome"/>
    <property type="evidence" value="ECO:0000353"/>
    <property type="project" value="FlyBase"/>
</dbReference>
<dbReference type="GO" id="GO:0005634">
    <property type="term" value="C:nucleus"/>
    <property type="evidence" value="ECO:0000318"/>
    <property type="project" value="GO_Central"/>
</dbReference>
<dbReference type="GO" id="GO:0003677">
    <property type="term" value="F:DNA binding"/>
    <property type="evidence" value="ECO:0007669"/>
    <property type="project" value="UniProtKB-KW"/>
</dbReference>
<dbReference type="GO" id="GO:0046982">
    <property type="term" value="F:protein heterodimerization activity"/>
    <property type="evidence" value="ECO:0007669"/>
    <property type="project" value="InterPro"/>
</dbReference>
<dbReference type="GO" id="GO:0030527">
    <property type="term" value="F:structural constituent of chromatin"/>
    <property type="evidence" value="ECO:0007669"/>
    <property type="project" value="InterPro"/>
</dbReference>
<dbReference type="GO" id="GO:0007059">
    <property type="term" value="P:chromosome segregation"/>
    <property type="evidence" value="ECO:0000315"/>
    <property type="project" value="FlyBase"/>
</dbReference>
<dbReference type="GO" id="GO:0031507">
    <property type="term" value="P:heterochromatin formation"/>
    <property type="evidence" value="ECO:0000316"/>
    <property type="project" value="FlyBase"/>
</dbReference>
<dbReference type="GO" id="GO:0051382">
    <property type="term" value="P:kinetochore assembly"/>
    <property type="evidence" value="ECO:0000315"/>
    <property type="project" value="FlyBase"/>
</dbReference>
<dbReference type="GO" id="GO:0051383">
    <property type="term" value="P:kinetochore organization"/>
    <property type="evidence" value="ECO:0000314"/>
    <property type="project" value="UniProtKB"/>
</dbReference>
<dbReference type="GO" id="GO:0000278">
    <property type="term" value="P:mitotic cell cycle"/>
    <property type="evidence" value="ECO:0000315"/>
    <property type="project" value="FlyBase"/>
</dbReference>
<dbReference type="GO" id="GO:0007080">
    <property type="term" value="P:mitotic metaphase chromosome alignment"/>
    <property type="evidence" value="ECO:0000315"/>
    <property type="project" value="FlyBase"/>
</dbReference>
<dbReference type="GO" id="GO:0051225">
    <property type="term" value="P:spindle assembly"/>
    <property type="evidence" value="ECO:0000315"/>
    <property type="project" value="FlyBase"/>
</dbReference>
<dbReference type="Gene3D" id="1.10.20.10">
    <property type="entry name" value="Histone, subunit A"/>
    <property type="match status" value="1"/>
</dbReference>
<dbReference type="InterPro" id="IPR009072">
    <property type="entry name" value="Histone-fold"/>
</dbReference>
<dbReference type="InterPro" id="IPR007125">
    <property type="entry name" value="Histone_H2A/H2B/H3"/>
</dbReference>
<dbReference type="InterPro" id="IPR000164">
    <property type="entry name" value="Histone_H3/CENP-A"/>
</dbReference>
<dbReference type="PANTHER" id="PTHR45810">
    <property type="entry name" value="HISTONE H3.2"/>
    <property type="match status" value="1"/>
</dbReference>
<dbReference type="Pfam" id="PF00125">
    <property type="entry name" value="Histone"/>
    <property type="match status" value="1"/>
</dbReference>
<dbReference type="PRINTS" id="PR00622">
    <property type="entry name" value="HISTONEH3"/>
</dbReference>
<dbReference type="SMART" id="SM00428">
    <property type="entry name" value="H3"/>
    <property type="match status" value="1"/>
</dbReference>
<dbReference type="SUPFAM" id="SSF47113">
    <property type="entry name" value="Histone-fold"/>
    <property type="match status" value="1"/>
</dbReference>
<organism>
    <name type="scientific">Drosophila melanogaster</name>
    <name type="common">Fruit fly</name>
    <dbReference type="NCBI Taxonomy" id="7227"/>
    <lineage>
        <taxon>Eukaryota</taxon>
        <taxon>Metazoa</taxon>
        <taxon>Ecdysozoa</taxon>
        <taxon>Arthropoda</taxon>
        <taxon>Hexapoda</taxon>
        <taxon>Insecta</taxon>
        <taxon>Pterygota</taxon>
        <taxon>Neoptera</taxon>
        <taxon>Endopterygota</taxon>
        <taxon>Diptera</taxon>
        <taxon>Brachycera</taxon>
        <taxon>Muscomorpha</taxon>
        <taxon>Ephydroidea</taxon>
        <taxon>Drosophilidae</taxon>
        <taxon>Drosophila</taxon>
        <taxon>Sophophora</taxon>
    </lineage>
</organism>
<sequence length="225" mass="25968">MPRHSRAKRAPRPSANNSKSPNDDDTAFRSPEPEDGTDYGLEFTTSQLTLQDNNRRSSTLRRDAGRRQPAARDSSTSGEEEDQENRYPTTRSPQTRRMTVQQESKTRAAGPVAAQNQTRRRKAANPMSRAKRMDREIRRLQHHPGTLIPKLPFSRLVREFIVKYSDDEPLRVTEGALLAMQESCEMYLTQRLADSYMLTKHRNRVTLEVRDMALMAYICDRGRQF</sequence>
<protein>
    <recommendedName>
        <fullName>Histone H3-like centromeric protein cid</fullName>
    </recommendedName>
    <alternativeName>
        <fullName>CENP-A homolog</fullName>
    </alternativeName>
    <alternativeName>
        <fullName>Centromere identifier protein</fullName>
    </alternativeName>
</protein>
<accession>Q9V6Q2</accession>
<accession>Q7YUD4</accession>
<accession>Q7YUD5</accession>
<accession>Q8MQP5</accession>
<accession>Q9NG62</accession>
<evidence type="ECO:0000250" key="1">
    <source>
        <dbReference type="UniProtKB" id="P49450"/>
    </source>
</evidence>
<evidence type="ECO:0000256" key="2">
    <source>
        <dbReference type="SAM" id="MobiDB-lite"/>
    </source>
</evidence>
<evidence type="ECO:0000269" key="3">
    <source>
    </source>
</evidence>
<evidence type="ECO:0000269" key="4">
    <source>
    </source>
</evidence>
<evidence type="ECO:0000269" key="5">
    <source>
    </source>
</evidence>
<evidence type="ECO:0000269" key="6">
    <source>
    </source>
</evidence>
<evidence type="ECO:0000269" key="7">
    <source>
    </source>
</evidence>
<evidence type="ECO:0000269" key="8">
    <source>
    </source>
</evidence>
<evidence type="ECO:0000303" key="9">
    <source>
    </source>
</evidence>
<evidence type="ECO:0000305" key="10"/>
<evidence type="ECO:0000312" key="11">
    <source>
        <dbReference type="FlyBase" id="FBgn0040477"/>
    </source>
</evidence>
<evidence type="ECO:0007829" key="12">
    <source>
        <dbReference type="PDB" id="6XWT"/>
    </source>
</evidence>
<name>CID_DROME</name>
<reference key="1">
    <citation type="journal article" date="2000" name="Proc. Natl. Acad. Sci. U.S.A.">
        <title>Heterochromatic deposition of centromeric histone H3-like proteins.</title>
        <authorList>
            <person name="Henikoff S."/>
            <person name="Ahmad K."/>
            <person name="Platero J.S."/>
            <person name="van Steensel B."/>
        </authorList>
    </citation>
    <scope>NUCLEOTIDE SEQUENCE [GENOMIC DNA]</scope>
    <scope>SUBCELLULAR LOCATION</scope>
</reference>
<reference key="2">
    <citation type="journal article" date="2003" name="Heredity">
        <title>Drosophila melanogaster and D. simulans rescue strains produce fit offspring, despite divergent centromere-specific histone alleles.</title>
        <authorList>
            <person name="Sainz A."/>
            <person name="Wilder J.A."/>
            <person name="Wolf M."/>
            <person name="Hollocher H."/>
        </authorList>
    </citation>
    <scope>NUCLEOTIDE SEQUENCE [GENOMIC DNA]</scope>
    <source>
        <strain>Antigua</strain>
        <strain>In</strain>
        <strain>Melbourne</strain>
        <strain>Oregon-R</strain>
        <strain>Tai 255.1</strain>
    </source>
</reference>
<reference key="3">
    <citation type="journal article" date="2000" name="Science">
        <title>The genome sequence of Drosophila melanogaster.</title>
        <authorList>
            <person name="Adams M.D."/>
            <person name="Celniker S.E."/>
            <person name="Holt R.A."/>
            <person name="Evans C.A."/>
            <person name="Gocayne J.D."/>
            <person name="Amanatides P.G."/>
            <person name="Scherer S.E."/>
            <person name="Li P.W."/>
            <person name="Hoskins R.A."/>
            <person name="Galle R.F."/>
            <person name="George R.A."/>
            <person name="Lewis S.E."/>
            <person name="Richards S."/>
            <person name="Ashburner M."/>
            <person name="Henderson S.N."/>
            <person name="Sutton G.G."/>
            <person name="Wortman J.R."/>
            <person name="Yandell M.D."/>
            <person name="Zhang Q."/>
            <person name="Chen L.X."/>
            <person name="Brandon R.C."/>
            <person name="Rogers Y.-H.C."/>
            <person name="Blazej R.G."/>
            <person name="Champe M."/>
            <person name="Pfeiffer B.D."/>
            <person name="Wan K.H."/>
            <person name="Doyle C."/>
            <person name="Baxter E.G."/>
            <person name="Helt G."/>
            <person name="Nelson C.R."/>
            <person name="Miklos G.L.G."/>
            <person name="Abril J.F."/>
            <person name="Agbayani A."/>
            <person name="An H.-J."/>
            <person name="Andrews-Pfannkoch C."/>
            <person name="Baldwin D."/>
            <person name="Ballew R.M."/>
            <person name="Basu A."/>
            <person name="Baxendale J."/>
            <person name="Bayraktaroglu L."/>
            <person name="Beasley E.M."/>
            <person name="Beeson K.Y."/>
            <person name="Benos P.V."/>
            <person name="Berman B.P."/>
            <person name="Bhandari D."/>
            <person name="Bolshakov S."/>
            <person name="Borkova D."/>
            <person name="Botchan M.R."/>
            <person name="Bouck J."/>
            <person name="Brokstein P."/>
            <person name="Brottier P."/>
            <person name="Burtis K.C."/>
            <person name="Busam D.A."/>
            <person name="Butler H."/>
            <person name="Cadieu E."/>
            <person name="Center A."/>
            <person name="Chandra I."/>
            <person name="Cherry J.M."/>
            <person name="Cawley S."/>
            <person name="Dahlke C."/>
            <person name="Davenport L.B."/>
            <person name="Davies P."/>
            <person name="de Pablos B."/>
            <person name="Delcher A."/>
            <person name="Deng Z."/>
            <person name="Mays A.D."/>
            <person name="Dew I."/>
            <person name="Dietz S.M."/>
            <person name="Dodson K."/>
            <person name="Doup L.E."/>
            <person name="Downes M."/>
            <person name="Dugan-Rocha S."/>
            <person name="Dunkov B.C."/>
            <person name="Dunn P."/>
            <person name="Durbin K.J."/>
            <person name="Evangelista C.C."/>
            <person name="Ferraz C."/>
            <person name="Ferriera S."/>
            <person name="Fleischmann W."/>
            <person name="Fosler C."/>
            <person name="Gabrielian A.E."/>
            <person name="Garg N.S."/>
            <person name="Gelbart W.M."/>
            <person name="Glasser K."/>
            <person name="Glodek A."/>
            <person name="Gong F."/>
            <person name="Gorrell J.H."/>
            <person name="Gu Z."/>
            <person name="Guan P."/>
            <person name="Harris M."/>
            <person name="Harris N.L."/>
            <person name="Harvey D.A."/>
            <person name="Heiman T.J."/>
            <person name="Hernandez J.R."/>
            <person name="Houck J."/>
            <person name="Hostin D."/>
            <person name="Houston K.A."/>
            <person name="Howland T.J."/>
            <person name="Wei M.-H."/>
            <person name="Ibegwam C."/>
            <person name="Jalali M."/>
            <person name="Kalush F."/>
            <person name="Karpen G.H."/>
            <person name="Ke Z."/>
            <person name="Kennison J.A."/>
            <person name="Ketchum K.A."/>
            <person name="Kimmel B.E."/>
            <person name="Kodira C.D."/>
            <person name="Kraft C.L."/>
            <person name="Kravitz S."/>
            <person name="Kulp D."/>
            <person name="Lai Z."/>
            <person name="Lasko P."/>
            <person name="Lei Y."/>
            <person name="Levitsky A.A."/>
            <person name="Li J.H."/>
            <person name="Li Z."/>
            <person name="Liang Y."/>
            <person name="Lin X."/>
            <person name="Liu X."/>
            <person name="Mattei B."/>
            <person name="McIntosh T.C."/>
            <person name="McLeod M.P."/>
            <person name="McPherson D."/>
            <person name="Merkulov G."/>
            <person name="Milshina N.V."/>
            <person name="Mobarry C."/>
            <person name="Morris J."/>
            <person name="Moshrefi A."/>
            <person name="Mount S.M."/>
            <person name="Moy M."/>
            <person name="Murphy B."/>
            <person name="Murphy L."/>
            <person name="Muzny D.M."/>
            <person name="Nelson D.L."/>
            <person name="Nelson D.R."/>
            <person name="Nelson K.A."/>
            <person name="Nixon K."/>
            <person name="Nusskern D.R."/>
            <person name="Pacleb J.M."/>
            <person name="Palazzolo M."/>
            <person name="Pittman G.S."/>
            <person name="Pan S."/>
            <person name="Pollard J."/>
            <person name="Puri V."/>
            <person name="Reese M.G."/>
            <person name="Reinert K."/>
            <person name="Remington K."/>
            <person name="Saunders R.D.C."/>
            <person name="Scheeler F."/>
            <person name="Shen H."/>
            <person name="Shue B.C."/>
            <person name="Siden-Kiamos I."/>
            <person name="Simpson M."/>
            <person name="Skupski M.P."/>
            <person name="Smith T.J."/>
            <person name="Spier E."/>
            <person name="Spradling A.C."/>
            <person name="Stapleton M."/>
            <person name="Strong R."/>
            <person name="Sun E."/>
            <person name="Svirskas R."/>
            <person name="Tector C."/>
            <person name="Turner R."/>
            <person name="Venter E."/>
            <person name="Wang A.H."/>
            <person name="Wang X."/>
            <person name="Wang Z.-Y."/>
            <person name="Wassarman D.A."/>
            <person name="Weinstock G.M."/>
            <person name="Weissenbach J."/>
            <person name="Williams S.M."/>
            <person name="Woodage T."/>
            <person name="Worley K.C."/>
            <person name="Wu D."/>
            <person name="Yang S."/>
            <person name="Yao Q.A."/>
            <person name="Ye J."/>
            <person name="Yeh R.-F."/>
            <person name="Zaveri J.S."/>
            <person name="Zhan M."/>
            <person name="Zhang G."/>
            <person name="Zhao Q."/>
            <person name="Zheng L."/>
            <person name="Zheng X.H."/>
            <person name="Zhong F.N."/>
            <person name="Zhong W."/>
            <person name="Zhou X."/>
            <person name="Zhu S.C."/>
            <person name="Zhu X."/>
            <person name="Smith H.O."/>
            <person name="Gibbs R.A."/>
            <person name="Myers E.W."/>
            <person name="Rubin G.M."/>
            <person name="Venter J.C."/>
        </authorList>
    </citation>
    <scope>NUCLEOTIDE SEQUENCE [LARGE SCALE GENOMIC DNA]</scope>
    <source>
        <strain>Berkeley</strain>
    </source>
</reference>
<reference key="4">
    <citation type="journal article" date="2002" name="Genome Biol.">
        <title>Annotation of the Drosophila melanogaster euchromatic genome: a systematic review.</title>
        <authorList>
            <person name="Misra S."/>
            <person name="Crosby M.A."/>
            <person name="Mungall C.J."/>
            <person name="Matthews B.B."/>
            <person name="Campbell K.S."/>
            <person name="Hradecky P."/>
            <person name="Huang Y."/>
            <person name="Kaminker J.S."/>
            <person name="Millburn G.H."/>
            <person name="Prochnik S.E."/>
            <person name="Smith C.D."/>
            <person name="Tupy J.L."/>
            <person name="Whitfield E.J."/>
            <person name="Bayraktaroglu L."/>
            <person name="Berman B.P."/>
            <person name="Bettencourt B.R."/>
            <person name="Celniker S.E."/>
            <person name="de Grey A.D.N.J."/>
            <person name="Drysdale R.A."/>
            <person name="Harris N.L."/>
            <person name="Richter J."/>
            <person name="Russo S."/>
            <person name="Schroeder A.J."/>
            <person name="Shu S.Q."/>
            <person name="Stapleton M."/>
            <person name="Yamada C."/>
            <person name="Ashburner M."/>
            <person name="Gelbart W.M."/>
            <person name="Rubin G.M."/>
            <person name="Lewis S.E."/>
        </authorList>
    </citation>
    <scope>GENOME REANNOTATION</scope>
    <source>
        <strain>Berkeley</strain>
    </source>
</reference>
<reference key="5">
    <citation type="journal article" date="2002" name="Genome Biol.">
        <title>A Drosophila full-length cDNA resource.</title>
        <authorList>
            <person name="Stapleton M."/>
            <person name="Carlson J.W."/>
            <person name="Brokstein P."/>
            <person name="Yu C."/>
            <person name="Champe M."/>
            <person name="George R.A."/>
            <person name="Guarin H."/>
            <person name="Kronmiller B."/>
            <person name="Pacleb J.M."/>
            <person name="Park S."/>
            <person name="Wan K.H."/>
            <person name="Rubin G.M."/>
            <person name="Celniker S.E."/>
        </authorList>
    </citation>
    <scope>NUCLEOTIDE SEQUENCE [LARGE SCALE MRNA]</scope>
    <source>
        <strain>Berkeley</strain>
        <tissue>Embryo</tissue>
    </source>
</reference>
<reference key="6">
    <citation type="journal article" date="2001" name="Nat. Cell Biol.">
        <title>The role of Drosophila CID in kinetochore formation, cell-cycle progression and heterochromatin interactions.</title>
        <authorList>
            <person name="Blower M.D."/>
            <person name="Karpen G.H."/>
        </authorList>
    </citation>
    <scope>FUNCTION</scope>
</reference>
<reference key="7">
    <citation type="journal article" date="2004" name="Nat. Struct. Mol. Biol.">
        <title>Centromeric chromatin exhibits a histone modification pattern that is distinct from both euchromatin and heterochromatin.</title>
        <authorList>
            <person name="Sullivan B.A."/>
            <person name="Karpen G.H."/>
        </authorList>
    </citation>
    <scope>SUBCELLULAR LOCATION</scope>
</reference>
<reference key="8">
    <citation type="journal article" date="2005" name="Chromosoma">
        <title>The Drosophila melanogaster condensin subunit Cap-G interacts with the centromere-specific histone H3 variant CID.</title>
        <authorList>
            <person name="Jaeger H."/>
            <person name="Rauch M."/>
            <person name="Heidmann S."/>
        </authorList>
    </citation>
    <scope>INTERACTION WITH CAP-G</scope>
</reference>
<reference key="9">
    <citation type="journal article" date="2006" name="PLoS Genet.">
        <title>Drosophila CENP-A mutations cause a BubR1-dependent early mitotic delay without normal localization of kinetochore components.</title>
        <authorList>
            <person name="Blower M.D."/>
            <person name="Daigle T."/>
            <person name="Kaufman T."/>
            <person name="Karpen G.H."/>
        </authorList>
    </citation>
    <scope>FUNCTION</scope>
</reference>
<reference key="10">
    <citation type="journal article" date="2008" name="J. Proteome Res.">
        <title>Phosphoproteome analysis of Drosophila melanogaster embryos.</title>
        <authorList>
            <person name="Zhai B."/>
            <person name="Villen J."/>
            <person name="Beausoleil S.A."/>
            <person name="Mintseris J."/>
            <person name="Gygi S.P."/>
        </authorList>
    </citation>
    <scope>PHOSPHORYLATION [LARGE SCALE ANALYSIS] AT SER-74; SER-75; THR-76 AND SER-77</scope>
    <scope>IDENTIFICATION BY MASS SPECTROMETRY</scope>
    <source>
        <tissue>Embryo</tissue>
    </source>
</reference>
<reference key="11">
    <citation type="journal article" date="2010" name="BMC Genet.">
        <title>A single mutation results in diploid gamete formation and parthenogenesis in a Drosophila yemanuclein-alpha meiosis I defective mutant.</title>
        <authorList>
            <person name="Meyer R.E."/>
            <person name="Delaage M."/>
            <person name="Rosset R."/>
            <person name="Capri M."/>
            <person name="Ait-Ahmed O."/>
        </authorList>
    </citation>
    <scope>SUBCELLULAR LOCATION</scope>
</reference>
<reference key="12">
    <citation type="journal article" date="2014" name="Cell Rep.">
        <title>The histone-fold protein CHRAC14 influences chromatin composition in response to DNA damage.</title>
        <authorList>
            <person name="Mathew V."/>
            <person name="Pauleau A.L."/>
            <person name="Steffen N."/>
            <person name="Bergner A."/>
            <person name="Becker P.B."/>
            <person name="Erhardt S."/>
        </authorList>
    </citation>
    <scope>FUNCTION</scope>
    <scope>SUBCELLULAR LOCATION</scope>
    <scope>INTERACTION WITH CHRAC-14</scope>
</reference>
<feature type="chain" id="PRO_0000249474" description="Histone H3-like centromeric protein cid">
    <location>
        <begin position="1"/>
        <end position="225"/>
    </location>
</feature>
<feature type="region of interest" description="Disordered" evidence="2">
    <location>
        <begin position="1"/>
        <end position="131"/>
    </location>
</feature>
<feature type="region of interest" description="H3-like">
    <location>
        <begin position="133"/>
        <end position="225"/>
    </location>
</feature>
<feature type="compositionally biased region" description="Basic residues" evidence="2">
    <location>
        <begin position="1"/>
        <end position="11"/>
    </location>
</feature>
<feature type="compositionally biased region" description="Polar residues" evidence="2">
    <location>
        <begin position="43"/>
        <end position="52"/>
    </location>
</feature>
<feature type="compositionally biased region" description="Polar residues" evidence="2">
    <location>
        <begin position="86"/>
        <end position="103"/>
    </location>
</feature>
<feature type="modified residue" description="Phosphoserine" evidence="6">
    <location>
        <position position="74"/>
    </location>
</feature>
<feature type="modified residue" description="Phosphoserine" evidence="6">
    <location>
        <position position="75"/>
    </location>
</feature>
<feature type="modified residue" description="Phosphothreonine" evidence="6">
    <location>
        <position position="76"/>
    </location>
</feature>
<feature type="modified residue" description="Phosphoserine" evidence="6">
    <location>
        <position position="77"/>
    </location>
</feature>
<feature type="sequence variant" description="In strain: Tai 255.1.">
    <original>AA</original>
    <variation>TS</variation>
    <location>
        <begin position="113"/>
        <end position="114"/>
    </location>
</feature>
<feature type="helix" evidence="12">
    <location>
        <begin position="150"/>
        <end position="164"/>
    </location>
</feature>
<feature type="strand" evidence="12">
    <location>
        <begin position="165"/>
        <end position="168"/>
    </location>
</feature>
<feature type="helix" evidence="12">
    <location>
        <begin position="174"/>
        <end position="201"/>
    </location>
</feature>
<feature type="helix" evidence="12">
    <location>
        <begin position="209"/>
        <end position="219"/>
    </location>
</feature>
<proteinExistence type="evidence at protein level"/>